<organism>
    <name type="scientific">Drosophila melanogaster</name>
    <name type="common">Fruit fly</name>
    <dbReference type="NCBI Taxonomy" id="7227"/>
    <lineage>
        <taxon>Eukaryota</taxon>
        <taxon>Metazoa</taxon>
        <taxon>Ecdysozoa</taxon>
        <taxon>Arthropoda</taxon>
        <taxon>Hexapoda</taxon>
        <taxon>Insecta</taxon>
        <taxon>Pterygota</taxon>
        <taxon>Neoptera</taxon>
        <taxon>Endopterygota</taxon>
        <taxon>Diptera</taxon>
        <taxon>Brachycera</taxon>
        <taxon>Muscomorpha</taxon>
        <taxon>Ephydroidea</taxon>
        <taxon>Drosophilidae</taxon>
        <taxon>Drosophila</taxon>
        <taxon>Sophophora</taxon>
    </lineage>
</organism>
<comment type="function">
    <text evidence="2 3">Component of the tRNA-splicing ligase complex required to facilitate the enzymatic turnover of catalytic subunit RtcB (By similarity). Plays an important role in a RNA repair and splicing pathway which controls axon regeneration in response to peripheral (PNS) and central nervous system (CNS) injury, by activating splicing of Xbp1 to promote axon regeneration in response to axotomy (PubMed:25961792).</text>
</comment>
<comment type="disruption phenotype">
    <text evidence="3">Larval lethal (PubMed:25961792). Severed axons in RNAi-mediated knockdown class III dendritic arborization (da) neurons of larvae, display decreased regeneration (PubMed:25961792). RNAi-mediated knockdown in larval class IV da neurons glial cells also impairs axon regeneration (PubMed:25961792).</text>
</comment>
<comment type="similarity">
    <text evidence="4">Belongs to the archease family.</text>
</comment>
<name>ARCH_DROME</name>
<reference key="1">
    <citation type="journal article" date="2000" name="Science">
        <title>The genome sequence of Drosophila melanogaster.</title>
        <authorList>
            <person name="Adams M.D."/>
            <person name="Celniker S.E."/>
            <person name="Holt R.A."/>
            <person name="Evans C.A."/>
            <person name="Gocayne J.D."/>
            <person name="Amanatides P.G."/>
            <person name="Scherer S.E."/>
            <person name="Li P.W."/>
            <person name="Hoskins R.A."/>
            <person name="Galle R.F."/>
            <person name="George R.A."/>
            <person name="Lewis S.E."/>
            <person name="Richards S."/>
            <person name="Ashburner M."/>
            <person name="Henderson S.N."/>
            <person name="Sutton G.G."/>
            <person name="Wortman J.R."/>
            <person name="Yandell M.D."/>
            <person name="Zhang Q."/>
            <person name="Chen L.X."/>
            <person name="Brandon R.C."/>
            <person name="Rogers Y.-H.C."/>
            <person name="Blazej R.G."/>
            <person name="Champe M."/>
            <person name="Pfeiffer B.D."/>
            <person name="Wan K.H."/>
            <person name="Doyle C."/>
            <person name="Baxter E.G."/>
            <person name="Helt G."/>
            <person name="Nelson C.R."/>
            <person name="Miklos G.L.G."/>
            <person name="Abril J.F."/>
            <person name="Agbayani A."/>
            <person name="An H.-J."/>
            <person name="Andrews-Pfannkoch C."/>
            <person name="Baldwin D."/>
            <person name="Ballew R.M."/>
            <person name="Basu A."/>
            <person name="Baxendale J."/>
            <person name="Bayraktaroglu L."/>
            <person name="Beasley E.M."/>
            <person name="Beeson K.Y."/>
            <person name="Benos P.V."/>
            <person name="Berman B.P."/>
            <person name="Bhandari D."/>
            <person name="Bolshakov S."/>
            <person name="Borkova D."/>
            <person name="Botchan M.R."/>
            <person name="Bouck J."/>
            <person name="Brokstein P."/>
            <person name="Brottier P."/>
            <person name="Burtis K.C."/>
            <person name="Busam D.A."/>
            <person name="Butler H."/>
            <person name="Cadieu E."/>
            <person name="Center A."/>
            <person name="Chandra I."/>
            <person name="Cherry J.M."/>
            <person name="Cawley S."/>
            <person name="Dahlke C."/>
            <person name="Davenport L.B."/>
            <person name="Davies P."/>
            <person name="de Pablos B."/>
            <person name="Delcher A."/>
            <person name="Deng Z."/>
            <person name="Mays A.D."/>
            <person name="Dew I."/>
            <person name="Dietz S.M."/>
            <person name="Dodson K."/>
            <person name="Doup L.E."/>
            <person name="Downes M."/>
            <person name="Dugan-Rocha S."/>
            <person name="Dunkov B.C."/>
            <person name="Dunn P."/>
            <person name="Durbin K.J."/>
            <person name="Evangelista C.C."/>
            <person name="Ferraz C."/>
            <person name="Ferriera S."/>
            <person name="Fleischmann W."/>
            <person name="Fosler C."/>
            <person name="Gabrielian A.E."/>
            <person name="Garg N.S."/>
            <person name="Gelbart W.M."/>
            <person name="Glasser K."/>
            <person name="Glodek A."/>
            <person name="Gong F."/>
            <person name="Gorrell J.H."/>
            <person name="Gu Z."/>
            <person name="Guan P."/>
            <person name="Harris M."/>
            <person name="Harris N.L."/>
            <person name="Harvey D.A."/>
            <person name="Heiman T.J."/>
            <person name="Hernandez J.R."/>
            <person name="Houck J."/>
            <person name="Hostin D."/>
            <person name="Houston K.A."/>
            <person name="Howland T.J."/>
            <person name="Wei M.-H."/>
            <person name="Ibegwam C."/>
            <person name="Jalali M."/>
            <person name="Kalush F."/>
            <person name="Karpen G.H."/>
            <person name="Ke Z."/>
            <person name="Kennison J.A."/>
            <person name="Ketchum K.A."/>
            <person name="Kimmel B.E."/>
            <person name="Kodira C.D."/>
            <person name="Kraft C.L."/>
            <person name="Kravitz S."/>
            <person name="Kulp D."/>
            <person name="Lai Z."/>
            <person name="Lasko P."/>
            <person name="Lei Y."/>
            <person name="Levitsky A.A."/>
            <person name="Li J.H."/>
            <person name="Li Z."/>
            <person name="Liang Y."/>
            <person name="Lin X."/>
            <person name="Liu X."/>
            <person name="Mattei B."/>
            <person name="McIntosh T.C."/>
            <person name="McLeod M.P."/>
            <person name="McPherson D."/>
            <person name="Merkulov G."/>
            <person name="Milshina N.V."/>
            <person name="Mobarry C."/>
            <person name="Morris J."/>
            <person name="Moshrefi A."/>
            <person name="Mount S.M."/>
            <person name="Moy M."/>
            <person name="Murphy B."/>
            <person name="Murphy L."/>
            <person name="Muzny D.M."/>
            <person name="Nelson D.L."/>
            <person name="Nelson D.R."/>
            <person name="Nelson K.A."/>
            <person name="Nixon K."/>
            <person name="Nusskern D.R."/>
            <person name="Pacleb J.M."/>
            <person name="Palazzolo M."/>
            <person name="Pittman G.S."/>
            <person name="Pan S."/>
            <person name="Pollard J."/>
            <person name="Puri V."/>
            <person name="Reese M.G."/>
            <person name="Reinert K."/>
            <person name="Remington K."/>
            <person name="Saunders R.D.C."/>
            <person name="Scheeler F."/>
            <person name="Shen H."/>
            <person name="Shue B.C."/>
            <person name="Siden-Kiamos I."/>
            <person name="Simpson M."/>
            <person name="Skupski M.P."/>
            <person name="Smith T.J."/>
            <person name="Spier E."/>
            <person name="Spradling A.C."/>
            <person name="Stapleton M."/>
            <person name="Strong R."/>
            <person name="Sun E."/>
            <person name="Svirskas R."/>
            <person name="Tector C."/>
            <person name="Turner R."/>
            <person name="Venter E."/>
            <person name="Wang A.H."/>
            <person name="Wang X."/>
            <person name="Wang Z.-Y."/>
            <person name="Wassarman D.A."/>
            <person name="Weinstock G.M."/>
            <person name="Weissenbach J."/>
            <person name="Williams S.M."/>
            <person name="Woodage T."/>
            <person name="Worley K.C."/>
            <person name="Wu D."/>
            <person name="Yang S."/>
            <person name="Yao Q.A."/>
            <person name="Ye J."/>
            <person name="Yeh R.-F."/>
            <person name="Zaveri J.S."/>
            <person name="Zhan M."/>
            <person name="Zhang G."/>
            <person name="Zhao Q."/>
            <person name="Zheng L."/>
            <person name="Zheng X.H."/>
            <person name="Zhong F.N."/>
            <person name="Zhong W."/>
            <person name="Zhou X."/>
            <person name="Zhu S.C."/>
            <person name="Zhu X."/>
            <person name="Smith H.O."/>
            <person name="Gibbs R.A."/>
            <person name="Myers E.W."/>
            <person name="Rubin G.M."/>
            <person name="Venter J.C."/>
        </authorList>
    </citation>
    <scope>NUCLEOTIDE SEQUENCE [LARGE SCALE GENOMIC DNA]</scope>
    <source>
        <strain>Berkeley</strain>
    </source>
</reference>
<reference key="2">
    <citation type="journal article" date="2002" name="Genome Biol.">
        <title>Annotation of the Drosophila melanogaster euchromatic genome: a systematic review.</title>
        <authorList>
            <person name="Misra S."/>
            <person name="Crosby M.A."/>
            <person name="Mungall C.J."/>
            <person name="Matthews B.B."/>
            <person name="Campbell K.S."/>
            <person name="Hradecky P."/>
            <person name="Huang Y."/>
            <person name="Kaminker J.S."/>
            <person name="Millburn G.H."/>
            <person name="Prochnik S.E."/>
            <person name="Smith C.D."/>
            <person name="Tupy J.L."/>
            <person name="Whitfield E.J."/>
            <person name="Bayraktaroglu L."/>
            <person name="Berman B.P."/>
            <person name="Bettencourt B.R."/>
            <person name="Celniker S.E."/>
            <person name="de Grey A.D.N.J."/>
            <person name="Drysdale R.A."/>
            <person name="Harris N.L."/>
            <person name="Richter J."/>
            <person name="Russo S."/>
            <person name="Schroeder A.J."/>
            <person name="Shu S.Q."/>
            <person name="Stapleton M."/>
            <person name="Yamada C."/>
            <person name="Ashburner M."/>
            <person name="Gelbart W.M."/>
            <person name="Rubin G.M."/>
            <person name="Lewis S.E."/>
        </authorList>
    </citation>
    <scope>GENOME REANNOTATION</scope>
    <source>
        <strain>Berkeley</strain>
    </source>
</reference>
<reference key="3">
    <citation type="submission" date="2003-02" db="EMBL/GenBank/DDBJ databases">
        <authorList>
            <person name="Stapleton M."/>
            <person name="Brokstein P."/>
            <person name="Hong L."/>
            <person name="Agbayani A."/>
            <person name="Carlson J.W."/>
            <person name="Champe M."/>
            <person name="Chavez C."/>
            <person name="Dorsett V."/>
            <person name="Dresnek D."/>
            <person name="Farfan D."/>
            <person name="Frise E."/>
            <person name="George R.A."/>
            <person name="Gonzalez M."/>
            <person name="Guarin H."/>
            <person name="Kronmiller B."/>
            <person name="Li P.W."/>
            <person name="Liao G."/>
            <person name="Miranda A."/>
            <person name="Mungall C.J."/>
            <person name="Nunoo J."/>
            <person name="Pacleb J.M."/>
            <person name="Paragas V."/>
            <person name="Park S."/>
            <person name="Patel S."/>
            <person name="Phouanenavong S."/>
            <person name="Wan K.H."/>
            <person name="Yu C."/>
            <person name="Lewis S.E."/>
            <person name="Rubin G.M."/>
            <person name="Celniker S.E."/>
        </authorList>
    </citation>
    <scope>NUCLEOTIDE SEQUENCE [LARGE SCALE MRNA]</scope>
    <source>
        <strain>Berkeley</strain>
        <tissue>Embryo</tissue>
    </source>
</reference>
<reference key="4">
    <citation type="journal article" date="2015" name="Nat. Neurosci.">
        <title>Regulation of axon regeneration by the RNA repair and splicing pathway.</title>
        <authorList>
            <person name="Song Y."/>
            <person name="Sretavan D."/>
            <person name="Salegio E.A."/>
            <person name="Berg J."/>
            <person name="Huang X."/>
            <person name="Cheng T."/>
            <person name="Xiong X."/>
            <person name="Meltzer S."/>
            <person name="Han C."/>
            <person name="Nguyen T.T."/>
            <person name="Bresnahan J.C."/>
            <person name="Beattie M.S."/>
            <person name="Jan L.Y."/>
            <person name="Jan Y.N."/>
        </authorList>
    </citation>
    <scope>FUNCTION</scope>
    <scope>DISRUPTION PHENOTYPE</scope>
</reference>
<feature type="chain" id="PRO_0000285956" description="Protein archease-like">
    <location>
        <begin position="1"/>
        <end position="156"/>
    </location>
</feature>
<feature type="binding site" evidence="1">
    <location>
        <position position="25"/>
    </location>
    <ligand>
        <name>Ca(2+)</name>
        <dbReference type="ChEBI" id="CHEBI:29108"/>
    </ligand>
</feature>
<feature type="binding site" evidence="1">
    <location>
        <position position="155"/>
    </location>
    <ligand>
        <name>Ca(2+)</name>
        <dbReference type="ChEBI" id="CHEBI:29108"/>
    </ligand>
</feature>
<feature type="binding site" evidence="1">
    <location>
        <position position="156"/>
    </location>
    <ligand>
        <name>Ca(2+)</name>
        <dbReference type="ChEBI" id="CHEBI:29108"/>
    </ligand>
</feature>
<feature type="sequence conflict" description="In Ref. 3; AAO39494." evidence="4" ref="3">
    <original>K</original>
    <variation>M</variation>
    <location>
        <position position="95"/>
    </location>
</feature>
<protein>
    <recommendedName>
        <fullName>Protein archease-like</fullName>
    </recommendedName>
</protein>
<gene>
    <name evidence="5" type="primary">Archease</name>
    <name evidence="5" type="ORF">CG6353</name>
</gene>
<proteinExistence type="evidence at transcript level"/>
<keyword id="KW-0106">Calcium</keyword>
<keyword id="KW-0479">Metal-binding</keyword>
<keyword id="KW-1185">Reference proteome</keyword>
<keyword id="KW-0819">tRNA processing</keyword>
<dbReference type="EMBL" id="AE014297">
    <property type="protein sequence ID" value="AAF55906.1"/>
    <property type="molecule type" value="Genomic_DNA"/>
</dbReference>
<dbReference type="EMBL" id="BT003491">
    <property type="protein sequence ID" value="AAO39494.1"/>
    <property type="molecule type" value="mRNA"/>
</dbReference>
<dbReference type="RefSeq" id="NP_650975.1">
    <property type="nucleotide sequence ID" value="NM_142718.2"/>
</dbReference>
<dbReference type="SMR" id="Q9VD92"/>
<dbReference type="BioGRID" id="67517">
    <property type="interactions" value="15"/>
</dbReference>
<dbReference type="FunCoup" id="Q9VD92">
    <property type="interactions" value="67"/>
</dbReference>
<dbReference type="IntAct" id="Q9VD92">
    <property type="interactions" value="3"/>
</dbReference>
<dbReference type="STRING" id="7227.FBpp0083515"/>
<dbReference type="PaxDb" id="7227-FBpp0083515"/>
<dbReference type="DNASU" id="42551"/>
<dbReference type="EnsemblMetazoa" id="FBtr0084116">
    <property type="protein sequence ID" value="FBpp0083515"/>
    <property type="gene ID" value="FBgn0038893"/>
</dbReference>
<dbReference type="GeneID" id="42551"/>
<dbReference type="KEGG" id="dme:Dmel_CG6353"/>
<dbReference type="UCSC" id="CG6353-RA">
    <property type="organism name" value="d. melanogaster"/>
</dbReference>
<dbReference type="AGR" id="FB:FBgn0289108"/>
<dbReference type="CTD" id="42551"/>
<dbReference type="FlyBase" id="FBgn0289108">
    <property type="gene designation" value="Archease"/>
</dbReference>
<dbReference type="VEuPathDB" id="VectorBase:FBgn0038893"/>
<dbReference type="eggNOG" id="KOG4528">
    <property type="taxonomic scope" value="Eukaryota"/>
</dbReference>
<dbReference type="GeneTree" id="ENSGT00390000003245"/>
<dbReference type="HOGENOM" id="CLU_111362_0_1_1"/>
<dbReference type="InParanoid" id="Q9VD92"/>
<dbReference type="OMA" id="AITYHKM"/>
<dbReference type="OrthoDB" id="2190767at2759"/>
<dbReference type="PhylomeDB" id="Q9VD92"/>
<dbReference type="BioGRID-ORCS" id="42551">
    <property type="hits" value="1 hit in 1 CRISPR screen"/>
</dbReference>
<dbReference type="GenomeRNAi" id="42551"/>
<dbReference type="PRO" id="PR:Q9VD92"/>
<dbReference type="Proteomes" id="UP000000803">
    <property type="component" value="Chromosome 3R"/>
</dbReference>
<dbReference type="Bgee" id="FBgn0038893">
    <property type="expression patterns" value="Expressed in adult anterior midgut class I enteroendocrine cell in adult midgut (Drosophila) and 113 other cell types or tissues"/>
</dbReference>
<dbReference type="ExpressionAtlas" id="Q9VD92">
    <property type="expression patterns" value="baseline and differential"/>
</dbReference>
<dbReference type="GO" id="GO:0072669">
    <property type="term" value="C:tRNA-splicing ligase complex"/>
    <property type="evidence" value="ECO:0000250"/>
    <property type="project" value="FlyBase"/>
</dbReference>
<dbReference type="GO" id="GO:0046872">
    <property type="term" value="F:metal ion binding"/>
    <property type="evidence" value="ECO:0007669"/>
    <property type="project" value="UniProtKB-KW"/>
</dbReference>
<dbReference type="GO" id="GO:0048680">
    <property type="term" value="P:positive regulation of axon regeneration"/>
    <property type="evidence" value="ECO:0000315"/>
    <property type="project" value="FlyBase"/>
</dbReference>
<dbReference type="GO" id="GO:0008033">
    <property type="term" value="P:tRNA processing"/>
    <property type="evidence" value="ECO:0000315"/>
    <property type="project" value="FlyBase"/>
</dbReference>
<dbReference type="FunFam" id="3.55.10.10:FF:000001">
    <property type="entry name" value="protein archease isoform X1"/>
    <property type="match status" value="1"/>
</dbReference>
<dbReference type="Gene3D" id="3.55.10.10">
    <property type="entry name" value="Archease domain"/>
    <property type="match status" value="1"/>
</dbReference>
<dbReference type="InterPro" id="IPR002804">
    <property type="entry name" value="Archease"/>
</dbReference>
<dbReference type="InterPro" id="IPR023572">
    <property type="entry name" value="Archease_dom"/>
</dbReference>
<dbReference type="InterPro" id="IPR036820">
    <property type="entry name" value="Archease_dom_sf"/>
</dbReference>
<dbReference type="PANTHER" id="PTHR12682">
    <property type="entry name" value="ARCHEASE"/>
    <property type="match status" value="1"/>
</dbReference>
<dbReference type="PANTHER" id="PTHR12682:SF11">
    <property type="entry name" value="PROTEIN ARCHEASE"/>
    <property type="match status" value="1"/>
</dbReference>
<dbReference type="Pfam" id="PF01951">
    <property type="entry name" value="Archease"/>
    <property type="match status" value="1"/>
</dbReference>
<dbReference type="SUPFAM" id="SSF69819">
    <property type="entry name" value="MTH1598-like"/>
    <property type="match status" value="1"/>
</dbReference>
<sequence>MEVEFSRENFLLPEMKYEYLDHTADVQIHGWGSSLKEAFEQCGVAMFGYMTELDYVSVEQCFEIEAHGDDLESLLFHFLDELLFLFSAEPYLVCKKLEITKFDVENFEISCHCYGEPFELGKHPQGTEVKAITYSAMQIIQDVEASNYEVFVIIDI</sequence>
<evidence type="ECO:0000250" key="1"/>
<evidence type="ECO:0000250" key="2">
    <source>
        <dbReference type="UniProtKB" id="Q8IWT0"/>
    </source>
</evidence>
<evidence type="ECO:0000269" key="3">
    <source>
    </source>
</evidence>
<evidence type="ECO:0000305" key="4"/>
<evidence type="ECO:0000312" key="5">
    <source>
        <dbReference type="FlyBase" id="FBgn0289108"/>
    </source>
</evidence>
<accession>Q9VD92</accession>
<accession>Q86P43</accession>